<reference key="1">
    <citation type="submission" date="2007-08" db="EMBL/GenBank/DDBJ databases">
        <title>Complete sequence of Shewanella sediminis HAW-EB3.</title>
        <authorList>
            <consortium name="US DOE Joint Genome Institute"/>
            <person name="Copeland A."/>
            <person name="Lucas S."/>
            <person name="Lapidus A."/>
            <person name="Barry K."/>
            <person name="Glavina del Rio T."/>
            <person name="Dalin E."/>
            <person name="Tice H."/>
            <person name="Pitluck S."/>
            <person name="Chertkov O."/>
            <person name="Brettin T."/>
            <person name="Bruce D."/>
            <person name="Detter J.C."/>
            <person name="Han C."/>
            <person name="Schmutz J."/>
            <person name="Larimer F."/>
            <person name="Land M."/>
            <person name="Hauser L."/>
            <person name="Kyrpides N."/>
            <person name="Kim E."/>
            <person name="Zhao J.-S."/>
            <person name="Richardson P."/>
        </authorList>
    </citation>
    <scope>NUCLEOTIDE SEQUENCE [LARGE SCALE GENOMIC DNA]</scope>
    <source>
        <strain>HAW-EB3</strain>
    </source>
</reference>
<feature type="chain" id="PRO_1000080198" description="Putative membrane protein insertion efficiency factor">
    <location>
        <begin position="1"/>
        <end position="85"/>
    </location>
</feature>
<organism>
    <name type="scientific">Shewanella sediminis (strain HAW-EB3)</name>
    <dbReference type="NCBI Taxonomy" id="425104"/>
    <lineage>
        <taxon>Bacteria</taxon>
        <taxon>Pseudomonadati</taxon>
        <taxon>Pseudomonadota</taxon>
        <taxon>Gammaproteobacteria</taxon>
        <taxon>Alteromonadales</taxon>
        <taxon>Shewanellaceae</taxon>
        <taxon>Shewanella</taxon>
    </lineage>
</organism>
<protein>
    <recommendedName>
        <fullName evidence="1">Putative membrane protein insertion efficiency factor</fullName>
    </recommendedName>
</protein>
<gene>
    <name type="ordered locus">Ssed_0003</name>
</gene>
<name>YIDD_SHESH</name>
<dbReference type="EMBL" id="CP000821">
    <property type="protein sequence ID" value="ABV34616.1"/>
    <property type="molecule type" value="Genomic_DNA"/>
</dbReference>
<dbReference type="RefSeq" id="WP_012004143.1">
    <property type="nucleotide sequence ID" value="NC_009831.1"/>
</dbReference>
<dbReference type="STRING" id="425104.Ssed_0003"/>
<dbReference type="KEGG" id="sse:Ssed_0003"/>
<dbReference type="eggNOG" id="COG0759">
    <property type="taxonomic scope" value="Bacteria"/>
</dbReference>
<dbReference type="HOGENOM" id="CLU_144811_5_2_6"/>
<dbReference type="OrthoDB" id="9801753at2"/>
<dbReference type="Proteomes" id="UP000002015">
    <property type="component" value="Chromosome"/>
</dbReference>
<dbReference type="GO" id="GO:0005886">
    <property type="term" value="C:plasma membrane"/>
    <property type="evidence" value="ECO:0007669"/>
    <property type="project" value="UniProtKB-SubCell"/>
</dbReference>
<dbReference type="HAMAP" id="MF_00386">
    <property type="entry name" value="UPF0161_YidD"/>
    <property type="match status" value="1"/>
</dbReference>
<dbReference type="InterPro" id="IPR002696">
    <property type="entry name" value="Membr_insert_effic_factor_YidD"/>
</dbReference>
<dbReference type="NCBIfam" id="TIGR00278">
    <property type="entry name" value="membrane protein insertion efficiency factor YidD"/>
    <property type="match status" value="1"/>
</dbReference>
<dbReference type="PANTHER" id="PTHR33383">
    <property type="entry name" value="MEMBRANE PROTEIN INSERTION EFFICIENCY FACTOR-RELATED"/>
    <property type="match status" value="1"/>
</dbReference>
<dbReference type="PANTHER" id="PTHR33383:SF1">
    <property type="entry name" value="MEMBRANE PROTEIN INSERTION EFFICIENCY FACTOR-RELATED"/>
    <property type="match status" value="1"/>
</dbReference>
<dbReference type="Pfam" id="PF01809">
    <property type="entry name" value="YidD"/>
    <property type="match status" value="1"/>
</dbReference>
<dbReference type="SMART" id="SM01234">
    <property type="entry name" value="Haemolytic"/>
    <property type="match status" value="1"/>
</dbReference>
<proteinExistence type="inferred from homology"/>
<comment type="function">
    <text evidence="1">Could be involved in insertion of integral membrane proteins into the membrane.</text>
</comment>
<comment type="subcellular location">
    <subcellularLocation>
        <location evidence="1">Cell inner membrane</location>
        <topology evidence="1">Peripheral membrane protein</topology>
        <orientation evidence="1">Cytoplasmic side</orientation>
    </subcellularLocation>
</comment>
<comment type="similarity">
    <text evidence="1">Belongs to the UPF0161 family.</text>
</comment>
<accession>A8FP43</accession>
<sequence length="85" mass="9550">MAKTQSPLQWLATTLIRGYQVFISPFLGANKCRFHPTCSTYAIEAIRLHGFAKGSWLAARRILKCHPLHPGGIDPVPPKKHRCNK</sequence>
<evidence type="ECO:0000255" key="1">
    <source>
        <dbReference type="HAMAP-Rule" id="MF_00386"/>
    </source>
</evidence>
<keyword id="KW-0997">Cell inner membrane</keyword>
<keyword id="KW-1003">Cell membrane</keyword>
<keyword id="KW-0472">Membrane</keyword>
<keyword id="KW-1185">Reference proteome</keyword>